<proteinExistence type="inferred from homology"/>
<gene>
    <name evidence="1" type="primary">rps14</name>
</gene>
<evidence type="ECO:0000255" key="1">
    <source>
        <dbReference type="HAMAP-Rule" id="MF_00537"/>
    </source>
</evidence>
<evidence type="ECO:0000305" key="2"/>
<keyword id="KW-0150">Chloroplast</keyword>
<keyword id="KW-0934">Plastid</keyword>
<keyword id="KW-0687">Ribonucleoprotein</keyword>
<keyword id="KW-0689">Ribosomal protein</keyword>
<keyword id="KW-0694">RNA-binding</keyword>
<keyword id="KW-0699">rRNA-binding</keyword>
<geneLocation type="chloroplast"/>
<organism>
    <name type="scientific">Nasturtium officinale</name>
    <name type="common">Watercress</name>
    <name type="synonym">Rorippa nasturtium-aquaticum</name>
    <dbReference type="NCBI Taxonomy" id="65948"/>
    <lineage>
        <taxon>Eukaryota</taxon>
        <taxon>Viridiplantae</taxon>
        <taxon>Streptophyta</taxon>
        <taxon>Embryophyta</taxon>
        <taxon>Tracheophyta</taxon>
        <taxon>Spermatophyta</taxon>
        <taxon>Magnoliopsida</taxon>
        <taxon>eudicotyledons</taxon>
        <taxon>Gunneridae</taxon>
        <taxon>Pentapetalae</taxon>
        <taxon>rosids</taxon>
        <taxon>malvids</taxon>
        <taxon>Brassicales</taxon>
        <taxon>Brassicaceae</taxon>
        <taxon>Cardamineae</taxon>
        <taxon>Nasturtium</taxon>
    </lineage>
</organism>
<name>RR14_NASOF</name>
<accession>A4QLT1</accession>
<comment type="function">
    <text evidence="1">Binds 16S rRNA, required for the assembly of 30S particles.</text>
</comment>
<comment type="subunit">
    <text evidence="1">Part of the 30S ribosomal subunit.</text>
</comment>
<comment type="subcellular location">
    <subcellularLocation>
        <location>Plastid</location>
        <location>Chloroplast</location>
    </subcellularLocation>
</comment>
<comment type="similarity">
    <text evidence="1">Belongs to the universal ribosomal protein uS14 family.</text>
</comment>
<dbReference type="EMBL" id="AP009376">
    <property type="protein sequence ID" value="BAF50636.1"/>
    <property type="molecule type" value="Genomic_DNA"/>
</dbReference>
<dbReference type="RefSeq" id="YP_001123812.1">
    <property type="nucleotide sequence ID" value="NC_009275.1"/>
</dbReference>
<dbReference type="SMR" id="A4QLT1"/>
<dbReference type="GeneID" id="4962114"/>
<dbReference type="GO" id="GO:0009507">
    <property type="term" value="C:chloroplast"/>
    <property type="evidence" value="ECO:0007669"/>
    <property type="project" value="UniProtKB-SubCell"/>
</dbReference>
<dbReference type="GO" id="GO:0015935">
    <property type="term" value="C:small ribosomal subunit"/>
    <property type="evidence" value="ECO:0007669"/>
    <property type="project" value="TreeGrafter"/>
</dbReference>
<dbReference type="GO" id="GO:0019843">
    <property type="term" value="F:rRNA binding"/>
    <property type="evidence" value="ECO:0007669"/>
    <property type="project" value="UniProtKB-UniRule"/>
</dbReference>
<dbReference type="GO" id="GO:0003735">
    <property type="term" value="F:structural constituent of ribosome"/>
    <property type="evidence" value="ECO:0007669"/>
    <property type="project" value="InterPro"/>
</dbReference>
<dbReference type="GO" id="GO:0006412">
    <property type="term" value="P:translation"/>
    <property type="evidence" value="ECO:0007669"/>
    <property type="project" value="UniProtKB-UniRule"/>
</dbReference>
<dbReference type="FunFam" id="1.10.287.1480:FF:000001">
    <property type="entry name" value="30S ribosomal protein S14"/>
    <property type="match status" value="1"/>
</dbReference>
<dbReference type="Gene3D" id="1.10.287.1480">
    <property type="match status" value="1"/>
</dbReference>
<dbReference type="HAMAP" id="MF_00537">
    <property type="entry name" value="Ribosomal_uS14_1"/>
    <property type="match status" value="1"/>
</dbReference>
<dbReference type="InterPro" id="IPR001209">
    <property type="entry name" value="Ribosomal_uS14"/>
</dbReference>
<dbReference type="InterPro" id="IPR023036">
    <property type="entry name" value="Ribosomal_uS14_bac/plastid"/>
</dbReference>
<dbReference type="InterPro" id="IPR018271">
    <property type="entry name" value="Ribosomal_uS14_CS"/>
</dbReference>
<dbReference type="NCBIfam" id="NF006477">
    <property type="entry name" value="PRK08881.1"/>
    <property type="match status" value="1"/>
</dbReference>
<dbReference type="PANTHER" id="PTHR19836">
    <property type="entry name" value="30S RIBOSOMAL PROTEIN S14"/>
    <property type="match status" value="1"/>
</dbReference>
<dbReference type="PANTHER" id="PTHR19836:SF19">
    <property type="entry name" value="SMALL RIBOSOMAL SUBUNIT PROTEIN US14M"/>
    <property type="match status" value="1"/>
</dbReference>
<dbReference type="Pfam" id="PF00253">
    <property type="entry name" value="Ribosomal_S14"/>
    <property type="match status" value="1"/>
</dbReference>
<dbReference type="SUPFAM" id="SSF57716">
    <property type="entry name" value="Glucocorticoid receptor-like (DNA-binding domain)"/>
    <property type="match status" value="1"/>
</dbReference>
<dbReference type="PROSITE" id="PS00527">
    <property type="entry name" value="RIBOSOMAL_S14"/>
    <property type="match status" value="1"/>
</dbReference>
<reference key="1">
    <citation type="submission" date="2007-03" db="EMBL/GenBank/DDBJ databases">
        <title>Sequencing analysis of Nasturtium officinale chloroplast DNA.</title>
        <authorList>
            <person name="Hosouchi T."/>
            <person name="Tsuruoka H."/>
            <person name="Kotani H."/>
        </authorList>
    </citation>
    <scope>NUCLEOTIDE SEQUENCE [LARGE SCALE GENOMIC DNA]</scope>
</reference>
<feature type="chain" id="PRO_0000354428" description="Small ribosomal subunit protein uS14c">
    <location>
        <begin position="1"/>
        <end position="100"/>
    </location>
</feature>
<protein>
    <recommendedName>
        <fullName evidence="1">Small ribosomal subunit protein uS14c</fullName>
    </recommendedName>
    <alternativeName>
        <fullName evidence="2">30S ribosomal protein S14, chloroplastic</fullName>
    </alternativeName>
</protein>
<sequence length="100" mass="11752">MAKKSLIYREKKRQQLEKKYHLIRRSSKKEISKIPSLSEKWKIHGKLQSPPRNSAPTRLHRRCFSTGRPRANYRDFGLSGHILREMVHACLLPGATRSSW</sequence>